<gene>
    <name evidence="2" type="primary">psaC</name>
    <name type="ordered locus">P9301_18001</name>
</gene>
<evidence type="ECO:0000250" key="1"/>
<evidence type="ECO:0000255" key="2">
    <source>
        <dbReference type="HAMAP-Rule" id="MF_01303"/>
    </source>
</evidence>
<comment type="function">
    <text evidence="2">Apoprotein for the two 4Fe-4S centers FA and FB of photosystem I (PSI); essential for photochemical activity. FB is the terminal electron acceptor of PSI, donating electrons to ferredoxin. The C-terminus interacts with PsaA/B/D and helps assemble the protein into the PSI complex. Required for binding of PsaD and PsaE to PSI. PSI is a plastocyanin/cytochrome c6-ferredoxin oxidoreductase, converting photonic excitation into a charge separation, which transfers an electron from the donor P700 chlorophyll pair to the spectroscopically characterized acceptors A0, A1, FX, FA and FB in turn.</text>
</comment>
<comment type="catalytic activity">
    <reaction evidence="2">
        <text>reduced [plastocyanin] + hnu + oxidized [2Fe-2S]-[ferredoxin] = oxidized [plastocyanin] + reduced [2Fe-2S]-[ferredoxin]</text>
        <dbReference type="Rhea" id="RHEA:30407"/>
        <dbReference type="Rhea" id="RHEA-COMP:10000"/>
        <dbReference type="Rhea" id="RHEA-COMP:10001"/>
        <dbReference type="Rhea" id="RHEA-COMP:10039"/>
        <dbReference type="Rhea" id="RHEA-COMP:10040"/>
        <dbReference type="ChEBI" id="CHEBI:29036"/>
        <dbReference type="ChEBI" id="CHEBI:30212"/>
        <dbReference type="ChEBI" id="CHEBI:33737"/>
        <dbReference type="ChEBI" id="CHEBI:33738"/>
        <dbReference type="ChEBI" id="CHEBI:49552"/>
        <dbReference type="EC" id="1.97.1.12"/>
    </reaction>
</comment>
<comment type="cofactor">
    <cofactor evidence="2">
        <name>[4Fe-4S] cluster</name>
        <dbReference type="ChEBI" id="CHEBI:49883"/>
    </cofactor>
    <text evidence="2">Binds 2 [4Fe-4S] clusters. Cluster 2 is most probably the spectroscopically characterized electron acceptor FA and cluster 1 is most probably FB.</text>
</comment>
<comment type="subunit">
    <text evidence="2">The cyanobacterial PSI reaction center is composed of one copy each of PsaA,B,C,D,E,F,I,J,K,L,M and X, and forms trimeric complexes.</text>
</comment>
<comment type="subcellular location">
    <subcellularLocation>
        <location evidence="2">Cellular thylakoid membrane</location>
        <topology evidence="2">Peripheral membrane protein</topology>
        <orientation evidence="2">Cytoplasmic side</orientation>
    </subcellularLocation>
</comment>
<sequence length="81" mass="8828">MSHAVKIYDTCIGCTQCVRACPLDVLEMVPWDGCKAGQIASSPRTEDCVGCKRCETACPTDFLSIRVYLGDETSRSMGLAY</sequence>
<organism>
    <name type="scientific">Prochlorococcus marinus (strain MIT 9301)</name>
    <dbReference type="NCBI Taxonomy" id="167546"/>
    <lineage>
        <taxon>Bacteria</taxon>
        <taxon>Bacillati</taxon>
        <taxon>Cyanobacteriota</taxon>
        <taxon>Cyanophyceae</taxon>
        <taxon>Synechococcales</taxon>
        <taxon>Prochlorococcaceae</taxon>
        <taxon>Prochlorococcus</taxon>
    </lineage>
</organism>
<protein>
    <recommendedName>
        <fullName evidence="2">Photosystem I iron-sulfur center</fullName>
        <ecNumber evidence="2">1.97.1.12</ecNumber>
    </recommendedName>
    <alternativeName>
        <fullName evidence="2">9 kDa polypeptide</fullName>
    </alternativeName>
    <alternativeName>
        <fullName evidence="2">PSI-C</fullName>
    </alternativeName>
    <alternativeName>
        <fullName evidence="2">Photosystem I subunit VII</fullName>
    </alternativeName>
    <alternativeName>
        <fullName evidence="2">PsaC</fullName>
    </alternativeName>
</protein>
<name>PSAC_PROM0</name>
<proteinExistence type="inferred from homology"/>
<keyword id="KW-0004">4Fe-4S</keyword>
<keyword id="KW-0249">Electron transport</keyword>
<keyword id="KW-0408">Iron</keyword>
<keyword id="KW-0411">Iron-sulfur</keyword>
<keyword id="KW-0472">Membrane</keyword>
<keyword id="KW-0479">Metal-binding</keyword>
<keyword id="KW-0560">Oxidoreductase</keyword>
<keyword id="KW-0602">Photosynthesis</keyword>
<keyword id="KW-0603">Photosystem I</keyword>
<keyword id="KW-1185">Reference proteome</keyword>
<keyword id="KW-0677">Repeat</keyword>
<keyword id="KW-0793">Thylakoid</keyword>
<keyword id="KW-0813">Transport</keyword>
<accession>A3PF98</accession>
<reference key="1">
    <citation type="journal article" date="2007" name="PLoS Genet.">
        <title>Patterns and implications of gene gain and loss in the evolution of Prochlorococcus.</title>
        <authorList>
            <person name="Kettler G.C."/>
            <person name="Martiny A.C."/>
            <person name="Huang K."/>
            <person name="Zucker J."/>
            <person name="Coleman M.L."/>
            <person name="Rodrigue S."/>
            <person name="Chen F."/>
            <person name="Lapidus A."/>
            <person name="Ferriera S."/>
            <person name="Johnson J."/>
            <person name="Steglich C."/>
            <person name="Church G.M."/>
            <person name="Richardson P."/>
            <person name="Chisholm S.W."/>
        </authorList>
    </citation>
    <scope>NUCLEOTIDE SEQUENCE [LARGE SCALE GENOMIC DNA]</scope>
    <source>
        <strain>MIT 9301</strain>
    </source>
</reference>
<feature type="initiator methionine" description="Removed" evidence="1">
    <location>
        <position position="1"/>
    </location>
</feature>
<feature type="chain" id="PRO_0000292098" description="Photosystem I iron-sulfur center">
    <location>
        <begin position="2"/>
        <end position="81"/>
    </location>
</feature>
<feature type="domain" description="4Fe-4S ferredoxin-type 1" evidence="2">
    <location>
        <begin position="2"/>
        <end position="31"/>
    </location>
</feature>
<feature type="domain" description="4Fe-4S ferredoxin-type 2" evidence="2">
    <location>
        <begin position="37"/>
        <end position="68"/>
    </location>
</feature>
<feature type="binding site" evidence="2">
    <location>
        <position position="11"/>
    </location>
    <ligand>
        <name>[4Fe-4S] cluster</name>
        <dbReference type="ChEBI" id="CHEBI:49883"/>
        <label>1</label>
    </ligand>
</feature>
<feature type="binding site" evidence="2">
    <location>
        <position position="14"/>
    </location>
    <ligand>
        <name>[4Fe-4S] cluster</name>
        <dbReference type="ChEBI" id="CHEBI:49883"/>
        <label>1</label>
    </ligand>
</feature>
<feature type="binding site" evidence="2">
    <location>
        <position position="17"/>
    </location>
    <ligand>
        <name>[4Fe-4S] cluster</name>
        <dbReference type="ChEBI" id="CHEBI:49883"/>
        <label>1</label>
    </ligand>
</feature>
<feature type="binding site" evidence="2">
    <location>
        <position position="21"/>
    </location>
    <ligand>
        <name>[4Fe-4S] cluster</name>
        <dbReference type="ChEBI" id="CHEBI:49883"/>
        <label>2</label>
    </ligand>
</feature>
<feature type="binding site" evidence="2">
    <location>
        <position position="48"/>
    </location>
    <ligand>
        <name>[4Fe-4S] cluster</name>
        <dbReference type="ChEBI" id="CHEBI:49883"/>
        <label>2</label>
    </ligand>
</feature>
<feature type="binding site" evidence="2">
    <location>
        <position position="51"/>
    </location>
    <ligand>
        <name>[4Fe-4S] cluster</name>
        <dbReference type="ChEBI" id="CHEBI:49883"/>
        <label>2</label>
    </ligand>
</feature>
<feature type="binding site" evidence="2">
    <location>
        <position position="54"/>
    </location>
    <ligand>
        <name>[4Fe-4S] cluster</name>
        <dbReference type="ChEBI" id="CHEBI:49883"/>
        <label>2</label>
    </ligand>
</feature>
<feature type="binding site" evidence="2">
    <location>
        <position position="58"/>
    </location>
    <ligand>
        <name>[4Fe-4S] cluster</name>
        <dbReference type="ChEBI" id="CHEBI:49883"/>
        <label>1</label>
    </ligand>
</feature>
<dbReference type="EC" id="1.97.1.12" evidence="2"/>
<dbReference type="EMBL" id="CP000576">
    <property type="protein sequence ID" value="ABO18423.1"/>
    <property type="molecule type" value="Genomic_DNA"/>
</dbReference>
<dbReference type="RefSeq" id="WP_007099573.1">
    <property type="nucleotide sequence ID" value="NC_009091.1"/>
</dbReference>
<dbReference type="SMR" id="A3PF98"/>
<dbReference type="STRING" id="167546.P9301_18001"/>
<dbReference type="GeneID" id="60200697"/>
<dbReference type="KEGG" id="pmg:P9301_18001"/>
<dbReference type="eggNOG" id="COG1143">
    <property type="taxonomic scope" value="Bacteria"/>
</dbReference>
<dbReference type="HOGENOM" id="CLU_139698_8_0_3"/>
<dbReference type="OrthoDB" id="9804603at2"/>
<dbReference type="Proteomes" id="UP000001430">
    <property type="component" value="Chromosome"/>
</dbReference>
<dbReference type="GO" id="GO:0009522">
    <property type="term" value="C:photosystem I"/>
    <property type="evidence" value="ECO:0007669"/>
    <property type="project" value="UniProtKB-KW"/>
</dbReference>
<dbReference type="GO" id="GO:0031676">
    <property type="term" value="C:plasma membrane-derived thylakoid membrane"/>
    <property type="evidence" value="ECO:0007669"/>
    <property type="project" value="UniProtKB-SubCell"/>
</dbReference>
<dbReference type="GO" id="GO:0051539">
    <property type="term" value="F:4 iron, 4 sulfur cluster binding"/>
    <property type="evidence" value="ECO:0007669"/>
    <property type="project" value="UniProtKB-KW"/>
</dbReference>
<dbReference type="GO" id="GO:0009055">
    <property type="term" value="F:electron transfer activity"/>
    <property type="evidence" value="ECO:0007669"/>
    <property type="project" value="UniProtKB-UniRule"/>
</dbReference>
<dbReference type="GO" id="GO:0046872">
    <property type="term" value="F:metal ion binding"/>
    <property type="evidence" value="ECO:0007669"/>
    <property type="project" value="UniProtKB-KW"/>
</dbReference>
<dbReference type="GO" id="GO:0016491">
    <property type="term" value="F:oxidoreductase activity"/>
    <property type="evidence" value="ECO:0007669"/>
    <property type="project" value="UniProtKB-KW"/>
</dbReference>
<dbReference type="GO" id="GO:0009773">
    <property type="term" value="P:photosynthetic electron transport in photosystem I"/>
    <property type="evidence" value="ECO:0007669"/>
    <property type="project" value="InterPro"/>
</dbReference>
<dbReference type="FunFam" id="3.30.70.20:FF:000001">
    <property type="entry name" value="Photosystem I iron-sulfur center"/>
    <property type="match status" value="1"/>
</dbReference>
<dbReference type="Gene3D" id="3.30.70.20">
    <property type="match status" value="1"/>
</dbReference>
<dbReference type="HAMAP" id="MF_01303">
    <property type="entry name" value="PSI_PsaC"/>
    <property type="match status" value="1"/>
</dbReference>
<dbReference type="InterPro" id="IPR017896">
    <property type="entry name" value="4Fe4S_Fe-S-bd"/>
</dbReference>
<dbReference type="InterPro" id="IPR017900">
    <property type="entry name" value="4Fe4S_Fe_S_CS"/>
</dbReference>
<dbReference type="InterPro" id="IPR050157">
    <property type="entry name" value="PSI_iron-sulfur_center"/>
</dbReference>
<dbReference type="InterPro" id="IPR017491">
    <property type="entry name" value="PSI_PsaC"/>
</dbReference>
<dbReference type="NCBIfam" id="TIGR03048">
    <property type="entry name" value="PS_I_psaC"/>
    <property type="match status" value="1"/>
</dbReference>
<dbReference type="PANTHER" id="PTHR24960:SF79">
    <property type="entry name" value="PHOTOSYSTEM I IRON-SULFUR CENTER"/>
    <property type="match status" value="1"/>
</dbReference>
<dbReference type="PANTHER" id="PTHR24960">
    <property type="entry name" value="PHOTOSYSTEM I IRON-SULFUR CENTER-RELATED"/>
    <property type="match status" value="1"/>
</dbReference>
<dbReference type="Pfam" id="PF12838">
    <property type="entry name" value="Fer4_7"/>
    <property type="match status" value="1"/>
</dbReference>
<dbReference type="SUPFAM" id="SSF54862">
    <property type="entry name" value="4Fe-4S ferredoxins"/>
    <property type="match status" value="1"/>
</dbReference>
<dbReference type="PROSITE" id="PS00198">
    <property type="entry name" value="4FE4S_FER_1"/>
    <property type="match status" value="2"/>
</dbReference>
<dbReference type="PROSITE" id="PS51379">
    <property type="entry name" value="4FE4S_FER_2"/>
    <property type="match status" value="2"/>
</dbReference>